<feature type="chain" id="PRO_1000015915" description="Glutamyl-tRNA(Gln) amidotransferase subunit A">
    <location>
        <begin position="1"/>
        <end position="488"/>
    </location>
</feature>
<feature type="active site" description="Charge relay system" evidence="1">
    <location>
        <position position="77"/>
    </location>
</feature>
<feature type="active site" description="Charge relay system" evidence="1">
    <location>
        <position position="152"/>
    </location>
</feature>
<feature type="active site" description="Acyl-ester intermediate" evidence="1">
    <location>
        <position position="176"/>
    </location>
</feature>
<gene>
    <name evidence="1" type="primary">gatA</name>
    <name type="ordered locus">SpyM50338</name>
</gene>
<keyword id="KW-0067">ATP-binding</keyword>
<keyword id="KW-0436">Ligase</keyword>
<keyword id="KW-0547">Nucleotide-binding</keyword>
<keyword id="KW-0648">Protein biosynthesis</keyword>
<organism>
    <name type="scientific">Streptococcus pyogenes serotype M5 (strain Manfredo)</name>
    <dbReference type="NCBI Taxonomy" id="160491"/>
    <lineage>
        <taxon>Bacteria</taxon>
        <taxon>Bacillati</taxon>
        <taxon>Bacillota</taxon>
        <taxon>Bacilli</taxon>
        <taxon>Lactobacillales</taxon>
        <taxon>Streptococcaceae</taxon>
        <taxon>Streptococcus</taxon>
    </lineage>
</organism>
<protein>
    <recommendedName>
        <fullName evidence="1">Glutamyl-tRNA(Gln) amidotransferase subunit A</fullName>
        <shortName evidence="1">Glu-ADT subunit A</shortName>
        <ecNumber evidence="1">6.3.5.7</ecNumber>
    </recommendedName>
</protein>
<dbReference type="EC" id="6.3.5.7" evidence="1"/>
<dbReference type="EMBL" id="AM295007">
    <property type="protein sequence ID" value="CAM29680.1"/>
    <property type="molecule type" value="Genomic_DNA"/>
</dbReference>
<dbReference type="RefSeq" id="WP_011888632.1">
    <property type="nucleotide sequence ID" value="NC_009332.1"/>
</dbReference>
<dbReference type="SMR" id="A2RCV7"/>
<dbReference type="KEGG" id="spf:SpyM50338"/>
<dbReference type="HOGENOM" id="CLU_009600_0_3_9"/>
<dbReference type="GO" id="GO:0030956">
    <property type="term" value="C:glutamyl-tRNA(Gln) amidotransferase complex"/>
    <property type="evidence" value="ECO:0007669"/>
    <property type="project" value="InterPro"/>
</dbReference>
<dbReference type="GO" id="GO:0005524">
    <property type="term" value="F:ATP binding"/>
    <property type="evidence" value="ECO:0007669"/>
    <property type="project" value="UniProtKB-KW"/>
</dbReference>
<dbReference type="GO" id="GO:0050567">
    <property type="term" value="F:glutaminyl-tRNA synthase (glutamine-hydrolyzing) activity"/>
    <property type="evidence" value="ECO:0007669"/>
    <property type="project" value="UniProtKB-UniRule"/>
</dbReference>
<dbReference type="GO" id="GO:0006412">
    <property type="term" value="P:translation"/>
    <property type="evidence" value="ECO:0007669"/>
    <property type="project" value="UniProtKB-UniRule"/>
</dbReference>
<dbReference type="Gene3D" id="3.90.1300.10">
    <property type="entry name" value="Amidase signature (AS) domain"/>
    <property type="match status" value="1"/>
</dbReference>
<dbReference type="HAMAP" id="MF_00120">
    <property type="entry name" value="GatA"/>
    <property type="match status" value="1"/>
</dbReference>
<dbReference type="InterPro" id="IPR000120">
    <property type="entry name" value="Amidase"/>
</dbReference>
<dbReference type="InterPro" id="IPR020556">
    <property type="entry name" value="Amidase_CS"/>
</dbReference>
<dbReference type="InterPro" id="IPR023631">
    <property type="entry name" value="Amidase_dom"/>
</dbReference>
<dbReference type="InterPro" id="IPR036928">
    <property type="entry name" value="AS_sf"/>
</dbReference>
<dbReference type="InterPro" id="IPR004412">
    <property type="entry name" value="GatA"/>
</dbReference>
<dbReference type="NCBIfam" id="TIGR00132">
    <property type="entry name" value="gatA"/>
    <property type="match status" value="1"/>
</dbReference>
<dbReference type="PANTHER" id="PTHR11895:SF151">
    <property type="entry name" value="GLUTAMYL-TRNA(GLN) AMIDOTRANSFERASE SUBUNIT A"/>
    <property type="match status" value="1"/>
</dbReference>
<dbReference type="PANTHER" id="PTHR11895">
    <property type="entry name" value="TRANSAMIDASE"/>
    <property type="match status" value="1"/>
</dbReference>
<dbReference type="Pfam" id="PF01425">
    <property type="entry name" value="Amidase"/>
    <property type="match status" value="1"/>
</dbReference>
<dbReference type="SUPFAM" id="SSF75304">
    <property type="entry name" value="Amidase signature (AS) enzymes"/>
    <property type="match status" value="1"/>
</dbReference>
<dbReference type="PROSITE" id="PS00571">
    <property type="entry name" value="AMIDASES"/>
    <property type="match status" value="1"/>
</dbReference>
<name>GATA_STRPG</name>
<sequence>MSFNHKTIEELHDLLVAKEISATELTQKTLEDIKSREEAVGSFITVSEEAALKQAAAIDAKGIDADNLMSGIPLAVKDNISTKGILTTAASKMLHNYEPIFDATSVANAYAKDMIVIGKTNMDEFAMGGSTETSYFKKTKNAWDHTKVPGGSSGGSATAVASGQVRLSLGSDTGGSIRQPAAFNGVVGLKPTYGTVSRYGLIAFGSSLDQIGPFAPTVKENAQLLNVIASSDVKDATSAPVRIADYTSKIGRDIKGMKIALPKEYLGEGIDPEIKETVLAAAKQFEALGATVEEVSLPHSKYGVAVYYIIASSEASSNLQRFDGIRYGFRADDAKNLDEIYVNTRSQGFGDEVKRRIMLGTFSLSSGYYDAYFKKAGQVRTLIIQDFDKVFADYDLILGPTTPTVAFGLDTLNHDPVAMYLADLLTIPVNLAGLPGISIPAGFVDGLPVGLQLIGPKYAEETIYQAAAAFEAVTDYHKQQPIIFGGDK</sequence>
<evidence type="ECO:0000255" key="1">
    <source>
        <dbReference type="HAMAP-Rule" id="MF_00120"/>
    </source>
</evidence>
<comment type="function">
    <text evidence="1">Allows the formation of correctly charged Gln-tRNA(Gln) through the transamidation of misacylated Glu-tRNA(Gln) in organisms which lack glutaminyl-tRNA synthetase. The reaction takes place in the presence of glutamine and ATP through an activated gamma-phospho-Glu-tRNA(Gln).</text>
</comment>
<comment type="catalytic activity">
    <reaction evidence="1">
        <text>L-glutamyl-tRNA(Gln) + L-glutamine + ATP + H2O = L-glutaminyl-tRNA(Gln) + L-glutamate + ADP + phosphate + H(+)</text>
        <dbReference type="Rhea" id="RHEA:17521"/>
        <dbReference type="Rhea" id="RHEA-COMP:9681"/>
        <dbReference type="Rhea" id="RHEA-COMP:9684"/>
        <dbReference type="ChEBI" id="CHEBI:15377"/>
        <dbReference type="ChEBI" id="CHEBI:15378"/>
        <dbReference type="ChEBI" id="CHEBI:29985"/>
        <dbReference type="ChEBI" id="CHEBI:30616"/>
        <dbReference type="ChEBI" id="CHEBI:43474"/>
        <dbReference type="ChEBI" id="CHEBI:58359"/>
        <dbReference type="ChEBI" id="CHEBI:78520"/>
        <dbReference type="ChEBI" id="CHEBI:78521"/>
        <dbReference type="ChEBI" id="CHEBI:456216"/>
        <dbReference type="EC" id="6.3.5.7"/>
    </reaction>
</comment>
<comment type="subunit">
    <text evidence="1">Heterotrimer of A, B and C subunits.</text>
</comment>
<comment type="similarity">
    <text evidence="1">Belongs to the amidase family. GatA subfamily.</text>
</comment>
<proteinExistence type="inferred from homology"/>
<accession>A2RCV7</accession>
<reference key="1">
    <citation type="journal article" date="2007" name="J. Bacteriol.">
        <title>Complete genome of acute rheumatic fever-associated serotype M5 Streptococcus pyogenes strain Manfredo.</title>
        <authorList>
            <person name="Holden M.T.G."/>
            <person name="Scott A."/>
            <person name="Cherevach I."/>
            <person name="Chillingworth T."/>
            <person name="Churcher C."/>
            <person name="Cronin A."/>
            <person name="Dowd L."/>
            <person name="Feltwell T."/>
            <person name="Hamlin N."/>
            <person name="Holroyd S."/>
            <person name="Jagels K."/>
            <person name="Moule S."/>
            <person name="Mungall K."/>
            <person name="Quail M.A."/>
            <person name="Price C."/>
            <person name="Rabbinowitsch E."/>
            <person name="Sharp S."/>
            <person name="Skelton J."/>
            <person name="Whitehead S."/>
            <person name="Barrell B.G."/>
            <person name="Kehoe M."/>
            <person name="Parkhill J."/>
        </authorList>
    </citation>
    <scope>NUCLEOTIDE SEQUENCE [LARGE SCALE GENOMIC DNA]</scope>
    <source>
        <strain>Manfredo</strain>
    </source>
</reference>